<keyword id="KW-0489">Methyltransferase</keyword>
<keyword id="KW-1185">Reference proteome</keyword>
<keyword id="KW-0949">S-adenosyl-L-methionine</keyword>
<keyword id="KW-0808">Transferase</keyword>
<keyword id="KW-0819">tRNA processing</keyword>
<protein>
    <recommendedName>
        <fullName evidence="2">tRNA (guanine-N(7)-)-methyltransferase</fullName>
        <ecNumber evidence="2">2.1.1.33</ecNumber>
    </recommendedName>
    <alternativeName>
        <fullName evidence="2">tRNA (guanine(46)-N(7))-methyltransferase</fullName>
    </alternativeName>
    <alternativeName>
        <fullName evidence="2">tRNA(m7G46)-methyltransferase</fullName>
    </alternativeName>
</protein>
<reference key="1">
    <citation type="book" date="2006" name="Gram positive pathogens, 2nd edition">
        <title>The Staphylococcus aureus NCTC 8325 genome.</title>
        <editorList>
            <person name="Fischetti V."/>
            <person name="Novick R."/>
            <person name="Ferretti J."/>
            <person name="Portnoy D."/>
            <person name="Rood J."/>
        </editorList>
        <authorList>
            <person name="Gillaspy A.F."/>
            <person name="Worrell V."/>
            <person name="Orvis J."/>
            <person name="Roe B.A."/>
            <person name="Dyer D.W."/>
            <person name="Iandolo J.J."/>
        </authorList>
    </citation>
    <scope>NUCLEOTIDE SEQUENCE [LARGE SCALE GENOMIC DNA]</scope>
    <source>
        <strain>NCTC 8325 / PS 47</strain>
    </source>
</reference>
<dbReference type="EC" id="2.1.1.33" evidence="2"/>
<dbReference type="EMBL" id="CP000253">
    <property type="protein sequence ID" value="ABD30930.1"/>
    <property type="molecule type" value="Genomic_DNA"/>
</dbReference>
<dbReference type="RefSeq" id="WP_001266157.1">
    <property type="nucleotide sequence ID" value="NZ_LS483365.1"/>
</dbReference>
<dbReference type="RefSeq" id="YP_500368.1">
    <property type="nucleotide sequence ID" value="NC_007795.1"/>
</dbReference>
<dbReference type="SMR" id="Q2FXI2"/>
<dbReference type="STRING" id="93061.SAOUHSC_01865"/>
<dbReference type="PaxDb" id="1280-SAXN108_1779"/>
<dbReference type="GeneID" id="3921754"/>
<dbReference type="KEGG" id="sao:SAOUHSC_01865"/>
<dbReference type="PATRIC" id="fig|93061.5.peg.1697"/>
<dbReference type="eggNOG" id="COG0220">
    <property type="taxonomic scope" value="Bacteria"/>
</dbReference>
<dbReference type="HOGENOM" id="CLU_050910_2_1_9"/>
<dbReference type="OrthoDB" id="9802090at2"/>
<dbReference type="UniPathway" id="UPA00989"/>
<dbReference type="PRO" id="PR:Q2FXI2"/>
<dbReference type="Proteomes" id="UP000008816">
    <property type="component" value="Chromosome"/>
</dbReference>
<dbReference type="GO" id="GO:0043527">
    <property type="term" value="C:tRNA methyltransferase complex"/>
    <property type="evidence" value="ECO:0000318"/>
    <property type="project" value="GO_Central"/>
</dbReference>
<dbReference type="GO" id="GO:0008176">
    <property type="term" value="F:tRNA (guanine(46)-N7)-methyltransferase activity"/>
    <property type="evidence" value="ECO:0000318"/>
    <property type="project" value="GO_Central"/>
</dbReference>
<dbReference type="GO" id="GO:0036265">
    <property type="term" value="P:RNA (guanine-N7)-methylation"/>
    <property type="evidence" value="ECO:0000318"/>
    <property type="project" value="GO_Central"/>
</dbReference>
<dbReference type="GO" id="GO:0030488">
    <property type="term" value="P:tRNA methylation"/>
    <property type="evidence" value="ECO:0000318"/>
    <property type="project" value="GO_Central"/>
</dbReference>
<dbReference type="CDD" id="cd02440">
    <property type="entry name" value="AdoMet_MTases"/>
    <property type="match status" value="1"/>
</dbReference>
<dbReference type="FunFam" id="3.40.50.150:FF:000035">
    <property type="entry name" value="tRNA (guanine-N(7)-)-methyltransferase"/>
    <property type="match status" value="1"/>
</dbReference>
<dbReference type="Gene3D" id="3.40.50.150">
    <property type="entry name" value="Vaccinia Virus protein VP39"/>
    <property type="match status" value="1"/>
</dbReference>
<dbReference type="HAMAP" id="MF_01057">
    <property type="entry name" value="tRNA_methyltr_TrmB"/>
    <property type="match status" value="1"/>
</dbReference>
<dbReference type="InterPro" id="IPR029063">
    <property type="entry name" value="SAM-dependent_MTases_sf"/>
</dbReference>
<dbReference type="InterPro" id="IPR003358">
    <property type="entry name" value="tRNA_(Gua-N-7)_MeTrfase_Trmb"/>
</dbReference>
<dbReference type="InterPro" id="IPR055361">
    <property type="entry name" value="tRNA_methyltr_TrmB_bact"/>
</dbReference>
<dbReference type="NCBIfam" id="NF001080">
    <property type="entry name" value="PRK00121.2-2"/>
    <property type="match status" value="1"/>
</dbReference>
<dbReference type="NCBIfam" id="TIGR00091">
    <property type="entry name" value="tRNA (guanosine(46)-N7)-methyltransferase TrmB"/>
    <property type="match status" value="1"/>
</dbReference>
<dbReference type="PANTHER" id="PTHR23417">
    <property type="entry name" value="3-DEOXY-D-MANNO-OCTULOSONIC-ACID TRANSFERASE/TRNA GUANINE-N 7 - -METHYLTRANSFERASE"/>
    <property type="match status" value="1"/>
</dbReference>
<dbReference type="PANTHER" id="PTHR23417:SF14">
    <property type="entry name" value="PENTACOTRIPEPTIDE-REPEAT REGION OF PRORP DOMAIN-CONTAINING PROTEIN"/>
    <property type="match status" value="1"/>
</dbReference>
<dbReference type="Pfam" id="PF02390">
    <property type="entry name" value="Methyltransf_4"/>
    <property type="match status" value="1"/>
</dbReference>
<dbReference type="SUPFAM" id="SSF53335">
    <property type="entry name" value="S-adenosyl-L-methionine-dependent methyltransferases"/>
    <property type="match status" value="1"/>
</dbReference>
<dbReference type="PROSITE" id="PS51625">
    <property type="entry name" value="SAM_MT_TRMB"/>
    <property type="match status" value="1"/>
</dbReference>
<proteinExistence type="inferred from homology"/>
<accession>Q2FXI2</accession>
<name>TRMB_STAA8</name>
<gene>
    <name evidence="2" type="primary">trmB</name>
    <name type="ordered locus">SAOUHSC_01865</name>
</gene>
<comment type="function">
    <text evidence="2">Catalyzes the formation of N(7)-methylguanine at position 46 (m7G46) in tRNA.</text>
</comment>
<comment type="catalytic activity">
    <reaction evidence="2">
        <text>guanosine(46) in tRNA + S-adenosyl-L-methionine = N(7)-methylguanosine(46) in tRNA + S-adenosyl-L-homocysteine</text>
        <dbReference type="Rhea" id="RHEA:42708"/>
        <dbReference type="Rhea" id="RHEA-COMP:10188"/>
        <dbReference type="Rhea" id="RHEA-COMP:10189"/>
        <dbReference type="ChEBI" id="CHEBI:57856"/>
        <dbReference type="ChEBI" id="CHEBI:59789"/>
        <dbReference type="ChEBI" id="CHEBI:74269"/>
        <dbReference type="ChEBI" id="CHEBI:74480"/>
        <dbReference type="EC" id="2.1.1.33"/>
    </reaction>
</comment>
<comment type="pathway">
    <text evidence="2">tRNA modification; N(7)-methylguanine-tRNA biosynthesis.</text>
</comment>
<comment type="similarity">
    <text evidence="2">Belongs to the class I-like SAM-binding methyltransferase superfamily. TrmB family.</text>
</comment>
<feature type="chain" id="PRO_0000288232" description="tRNA (guanine-N(7)-)-methyltransferase">
    <location>
        <begin position="1"/>
        <end position="214"/>
    </location>
</feature>
<feature type="active site" evidence="1">
    <location>
        <position position="117"/>
    </location>
</feature>
<feature type="binding site" evidence="2">
    <location>
        <position position="43"/>
    </location>
    <ligand>
        <name>S-adenosyl-L-methionine</name>
        <dbReference type="ChEBI" id="CHEBI:59789"/>
    </ligand>
</feature>
<feature type="binding site" evidence="2">
    <location>
        <position position="68"/>
    </location>
    <ligand>
        <name>S-adenosyl-L-methionine</name>
        <dbReference type="ChEBI" id="CHEBI:59789"/>
    </ligand>
</feature>
<feature type="binding site" evidence="2">
    <location>
        <position position="95"/>
    </location>
    <ligand>
        <name>S-adenosyl-L-methionine</name>
        <dbReference type="ChEBI" id="CHEBI:59789"/>
    </ligand>
</feature>
<feature type="binding site" evidence="2">
    <location>
        <position position="117"/>
    </location>
    <ligand>
        <name>S-adenosyl-L-methionine</name>
        <dbReference type="ChEBI" id="CHEBI:59789"/>
    </ligand>
</feature>
<feature type="binding site" evidence="2">
    <location>
        <position position="121"/>
    </location>
    <ligand>
        <name>substrate</name>
    </ligand>
</feature>
<feature type="binding site" evidence="2">
    <location>
        <position position="153"/>
    </location>
    <ligand>
        <name>substrate</name>
    </ligand>
</feature>
<feature type="binding site" evidence="2">
    <location>
        <begin position="190"/>
        <end position="193"/>
    </location>
    <ligand>
        <name>substrate</name>
    </ligand>
</feature>
<organism>
    <name type="scientific">Staphylococcus aureus (strain NCTC 8325 / PS 47)</name>
    <dbReference type="NCBI Taxonomy" id="93061"/>
    <lineage>
        <taxon>Bacteria</taxon>
        <taxon>Bacillati</taxon>
        <taxon>Bacillota</taxon>
        <taxon>Bacilli</taxon>
        <taxon>Bacillales</taxon>
        <taxon>Staphylococcaceae</taxon>
        <taxon>Staphylococcus</taxon>
    </lineage>
</organism>
<sequence>MRVRYKPWAEDYLKDHPELVDMDGQHAGKMTEWFDKTQPIHIEIGSGMGQFITTLAAQNPHINYISMEREKSIVYKVLDKVKEMGLTNLKIICNDAIELNEYFKDGEVSRIYLNFSDPWPKNRHAKRRLTYHTFLALYQQILNDEGDLHFKTDNRGLFAYSLESMSQFGMYFTKINLNLHQEDDGSNILTEYEKKFSDKGSRIYRMEAKFHSQK</sequence>
<evidence type="ECO:0000250" key="1"/>
<evidence type="ECO:0000255" key="2">
    <source>
        <dbReference type="HAMAP-Rule" id="MF_01057"/>
    </source>
</evidence>